<dbReference type="EC" id="7.1.1.-" evidence="1"/>
<dbReference type="EMBL" id="X86563">
    <property type="protein sequence ID" value="CAA60363.1"/>
    <property type="status" value="ALT_SEQ"/>
    <property type="molecule type" value="Genomic_DNA"/>
</dbReference>
<dbReference type="PIR" id="S38992">
    <property type="entry name" value="S38992"/>
</dbReference>
<dbReference type="SMR" id="P0CD59"/>
<dbReference type="FunCoup" id="P0CD59">
    <property type="interactions" value="14"/>
</dbReference>
<dbReference type="STRING" id="4577.P0CD59"/>
<dbReference type="KEGG" id="zma:845180"/>
<dbReference type="KEGG" id="zma:845181"/>
<dbReference type="MaizeGDB" id="105929"/>
<dbReference type="InParanoid" id="P0CD59"/>
<dbReference type="OrthoDB" id="783395at2759"/>
<dbReference type="Proteomes" id="UP000007305">
    <property type="component" value="Chloroplast"/>
</dbReference>
<dbReference type="ExpressionAtlas" id="P0CD59">
    <property type="expression patterns" value="baseline"/>
</dbReference>
<dbReference type="GO" id="GO:0009535">
    <property type="term" value="C:chloroplast thylakoid membrane"/>
    <property type="evidence" value="ECO:0007669"/>
    <property type="project" value="UniProtKB-SubCell"/>
</dbReference>
<dbReference type="GO" id="GO:0008137">
    <property type="term" value="F:NADH dehydrogenase (ubiquinone) activity"/>
    <property type="evidence" value="ECO:0007669"/>
    <property type="project" value="InterPro"/>
</dbReference>
<dbReference type="GO" id="GO:0048038">
    <property type="term" value="F:quinone binding"/>
    <property type="evidence" value="ECO:0007669"/>
    <property type="project" value="UniProtKB-KW"/>
</dbReference>
<dbReference type="GO" id="GO:0042773">
    <property type="term" value="P:ATP synthesis coupled electron transport"/>
    <property type="evidence" value="ECO:0007669"/>
    <property type="project" value="InterPro"/>
</dbReference>
<dbReference type="GO" id="GO:0019684">
    <property type="term" value="P:photosynthesis, light reaction"/>
    <property type="evidence" value="ECO:0007669"/>
    <property type="project" value="UniProtKB-UniRule"/>
</dbReference>
<dbReference type="HAMAP" id="MF_00445">
    <property type="entry name" value="NDH1_NuoN_1"/>
    <property type="match status" value="1"/>
</dbReference>
<dbReference type="InterPro" id="IPR010096">
    <property type="entry name" value="NADH-Q_OxRdtase_suN/2"/>
</dbReference>
<dbReference type="InterPro" id="IPR001750">
    <property type="entry name" value="ND/Mrp_TM"/>
</dbReference>
<dbReference type="InterPro" id="IPR045693">
    <property type="entry name" value="Ndh2_N"/>
</dbReference>
<dbReference type="NCBIfam" id="TIGR01770">
    <property type="entry name" value="NDH_I_N"/>
    <property type="match status" value="1"/>
</dbReference>
<dbReference type="NCBIfam" id="NF002701">
    <property type="entry name" value="PRK02504.1"/>
    <property type="match status" value="1"/>
</dbReference>
<dbReference type="PANTHER" id="PTHR22773">
    <property type="entry name" value="NADH DEHYDROGENASE"/>
    <property type="match status" value="1"/>
</dbReference>
<dbReference type="Pfam" id="PF19530">
    <property type="entry name" value="Ndh2_N"/>
    <property type="match status" value="1"/>
</dbReference>
<dbReference type="Pfam" id="PF00361">
    <property type="entry name" value="Proton_antipo_M"/>
    <property type="match status" value="1"/>
</dbReference>
<dbReference type="PRINTS" id="PR01434">
    <property type="entry name" value="NADHDHGNASE5"/>
</dbReference>
<name>NU2C2_MAIZE</name>
<gene>
    <name evidence="1" type="primary">ndhB2</name>
    <name type="synonym">ndh2-B</name>
</gene>
<proteinExistence type="evidence at transcript level"/>
<keyword id="KW-0150">Chloroplast</keyword>
<keyword id="KW-0472">Membrane</keyword>
<keyword id="KW-0520">NAD</keyword>
<keyword id="KW-0521">NADP</keyword>
<keyword id="KW-0934">Plastid</keyword>
<keyword id="KW-0618">Plastoquinone</keyword>
<keyword id="KW-0874">Quinone</keyword>
<keyword id="KW-1185">Reference proteome</keyword>
<keyword id="KW-0691">RNA editing</keyword>
<keyword id="KW-0793">Thylakoid</keyword>
<keyword id="KW-1278">Translocase</keyword>
<keyword id="KW-0812">Transmembrane</keyword>
<keyword id="KW-1133">Transmembrane helix</keyword>
<keyword id="KW-0813">Transport</keyword>
<sequence length="510" mass="57004">MIWHVQNENFILDSTRIFMKAFHLLLFHGSFIFPECILIFGLILLLMIDLTSDQKDRPWFYFISSTSLVISITALLFRWREEPIISFSGNFQTNNFNEIFQFLILLCSTLCIPLSVEYIECTEMAITEFLLFVLTATLGGMFLCGANDLITIFVALECFSLCSYLLSGYTKRDLRSNEATMKYLLMGGASSSILVYGFSWLYGLSGGEIELQEIVNGLINTQMYNSPGISIALIFITVGLGFKLSLAPFHQWTPDVYEGSPTPVVAFLSVTSKVAALALATRILDIPFYFSSNEWHLLLEILAILSMILGNLLAITQTSMKRMLAYSSIGQIGYVIIGIIVGDSNDGYASMITYMLFYISMNLGTFACIVLFGLRTGTDNIRDYAGLYTKDPFLALSLALCLLSLGGLPPLAGFFGKLYLFWCGWQAGLYFLVSIGLLTSVLSIYYYLKIIKLLMTGRNQEITPYVRNYRRSPLRSNNSIELSMTVCVIASTILGISMNPILAIAQDTLF</sequence>
<organism>
    <name type="scientific">Zea mays</name>
    <name type="common">Maize</name>
    <dbReference type="NCBI Taxonomy" id="4577"/>
    <lineage>
        <taxon>Eukaryota</taxon>
        <taxon>Viridiplantae</taxon>
        <taxon>Streptophyta</taxon>
        <taxon>Embryophyta</taxon>
        <taxon>Tracheophyta</taxon>
        <taxon>Spermatophyta</taxon>
        <taxon>Magnoliopsida</taxon>
        <taxon>Liliopsida</taxon>
        <taxon>Poales</taxon>
        <taxon>Poaceae</taxon>
        <taxon>PACMAD clade</taxon>
        <taxon>Panicoideae</taxon>
        <taxon>Andropogonodae</taxon>
        <taxon>Andropogoneae</taxon>
        <taxon>Tripsacinae</taxon>
        <taxon>Zea</taxon>
    </lineage>
</organism>
<accession>P0CD59</accession>
<accession>P46619</accession>
<feature type="chain" id="PRO_0000391317" description="NAD(P)H-quinone oxidoreductase subunit 2 B, chloroplastic">
    <location>
        <begin position="1"/>
        <end position="510"/>
    </location>
</feature>
<feature type="transmembrane region" description="Helical" evidence="1">
    <location>
        <begin position="24"/>
        <end position="44"/>
    </location>
</feature>
<feature type="transmembrane region" description="Helical" evidence="1">
    <location>
        <begin position="59"/>
        <end position="79"/>
    </location>
</feature>
<feature type="transmembrane region" description="Helical" evidence="1">
    <location>
        <begin position="99"/>
        <end position="119"/>
    </location>
</feature>
<feature type="transmembrane region" description="Helical" evidence="1">
    <location>
        <begin position="124"/>
        <end position="144"/>
    </location>
</feature>
<feature type="transmembrane region" description="Helical" evidence="1">
    <location>
        <begin position="149"/>
        <end position="169"/>
    </location>
</feature>
<feature type="transmembrane region" description="Helical" evidence="1">
    <location>
        <begin position="184"/>
        <end position="204"/>
    </location>
</feature>
<feature type="transmembrane region" description="Helical" evidence="1">
    <location>
        <begin position="229"/>
        <end position="249"/>
    </location>
</feature>
<feature type="transmembrane region" description="Helical" evidence="1">
    <location>
        <begin position="261"/>
        <end position="281"/>
    </location>
</feature>
<feature type="transmembrane region" description="Helical" evidence="1">
    <location>
        <begin position="295"/>
        <end position="315"/>
    </location>
</feature>
<feature type="transmembrane region" description="Helical" evidence="1">
    <location>
        <begin position="323"/>
        <end position="343"/>
    </location>
</feature>
<feature type="transmembrane region" description="Helical" evidence="1">
    <location>
        <begin position="354"/>
        <end position="374"/>
    </location>
</feature>
<feature type="transmembrane region" description="Helical" evidence="1">
    <location>
        <begin position="395"/>
        <end position="415"/>
    </location>
</feature>
<feature type="transmembrane region" description="Helical" evidence="1">
    <location>
        <begin position="418"/>
        <end position="438"/>
    </location>
</feature>
<feature type="transmembrane region" description="Helical" evidence="1">
    <location>
        <begin position="484"/>
        <end position="504"/>
    </location>
</feature>
<reference key="1">
    <citation type="journal article" date="1992" name="Nucleic Acids Res.">
        <title>Identification of editing positions in the ndhB transcript from maize chloroplasts reveals sequence similarities between editing sites of chloroplasts and plant mitochondria.</title>
        <authorList>
            <person name="Maier R.M."/>
            <person name="Neckermann K."/>
            <person name="Hoch B."/>
            <person name="Akhmedov N.B."/>
            <person name="Koessel H."/>
        </authorList>
    </citation>
    <scope>NUCLEOTIDE SEQUENCE [LARGE SCALE GENOMIC DNA]</scope>
    <scope>RNA EDITING</scope>
    <source>
        <strain>cv. B73</strain>
    </source>
</reference>
<reference key="2">
    <citation type="journal article" date="1995" name="J. Mol. Biol.">
        <title>Complete sequence of the maize chloroplast genome: gene content, hotspots of divergence and fine tuning of genetic information by transcript editing.</title>
        <authorList>
            <person name="Maier R.M."/>
            <person name="Neckermann K."/>
            <person name="Igloi G.L."/>
            <person name="Koessel H."/>
        </authorList>
    </citation>
    <scope>NUCLEOTIDE SEQUENCE [LARGE SCALE GENOMIC DNA]</scope>
    <source>
        <strain>cv. B73</strain>
    </source>
</reference>
<evidence type="ECO:0000255" key="1">
    <source>
        <dbReference type="HAMAP-Rule" id="MF_00445"/>
    </source>
</evidence>
<evidence type="ECO:0000269" key="2">
    <source>
    </source>
</evidence>
<geneLocation type="chloroplast"/>
<comment type="function">
    <text evidence="1">NDH shuttles electrons from NAD(P)H:plastoquinone, via FMN and iron-sulfur (Fe-S) centers, to quinones in the photosynthetic chain and possibly in a chloroplast respiratory chain. The immediate electron acceptor for the enzyme in this species is believed to be plastoquinone. Couples the redox reaction to proton translocation, and thus conserves the redox energy in a proton gradient.</text>
</comment>
<comment type="catalytic activity">
    <reaction evidence="1">
        <text>a plastoquinone + NADH + (n+1) H(+)(in) = a plastoquinol + NAD(+) + n H(+)(out)</text>
        <dbReference type="Rhea" id="RHEA:42608"/>
        <dbReference type="Rhea" id="RHEA-COMP:9561"/>
        <dbReference type="Rhea" id="RHEA-COMP:9562"/>
        <dbReference type="ChEBI" id="CHEBI:15378"/>
        <dbReference type="ChEBI" id="CHEBI:17757"/>
        <dbReference type="ChEBI" id="CHEBI:57540"/>
        <dbReference type="ChEBI" id="CHEBI:57945"/>
        <dbReference type="ChEBI" id="CHEBI:62192"/>
    </reaction>
</comment>
<comment type="catalytic activity">
    <reaction evidence="1">
        <text>a plastoquinone + NADPH + (n+1) H(+)(in) = a plastoquinol + NADP(+) + n H(+)(out)</text>
        <dbReference type="Rhea" id="RHEA:42612"/>
        <dbReference type="Rhea" id="RHEA-COMP:9561"/>
        <dbReference type="Rhea" id="RHEA-COMP:9562"/>
        <dbReference type="ChEBI" id="CHEBI:15378"/>
        <dbReference type="ChEBI" id="CHEBI:17757"/>
        <dbReference type="ChEBI" id="CHEBI:57783"/>
        <dbReference type="ChEBI" id="CHEBI:58349"/>
        <dbReference type="ChEBI" id="CHEBI:62192"/>
    </reaction>
</comment>
<comment type="subunit">
    <text evidence="1">NDH is composed of at least 16 different subunits, 5 of which are encoded in the nucleus.</text>
</comment>
<comment type="subcellular location">
    <subcellularLocation>
        <location evidence="1">Plastid</location>
        <location evidence="1">Chloroplast thylakoid membrane</location>
        <topology evidence="1">Multi-pass membrane protein</topology>
    </subcellularLocation>
</comment>
<comment type="RNA editing">
    <location>
        <position position="156" evidence="2"/>
    </location>
    <location>
        <position position="196" evidence="2"/>
    </location>
    <location>
        <position position="204" evidence="2"/>
    </location>
    <location>
        <position position="246" evidence="2"/>
    </location>
    <location>
        <position position="277" evidence="2"/>
    </location>
    <location>
        <position position="494" evidence="2"/>
    </location>
</comment>
<comment type="similarity">
    <text evidence="1">Belongs to the complex I subunit 2 family.</text>
</comment>
<protein>
    <recommendedName>
        <fullName evidence="1">NAD(P)H-quinone oxidoreductase subunit 2 B, chloroplastic</fullName>
        <ecNumber evidence="1">7.1.1.-</ecNumber>
    </recommendedName>
    <alternativeName>
        <fullName evidence="1">NAD(P)H dehydrogenase, subunit 2 B</fullName>
    </alternativeName>
    <alternativeName>
        <fullName evidence="1">NADH-plastoquinone oxidoreductase subunit 2 B</fullName>
    </alternativeName>
</protein>